<reference key="1">
    <citation type="journal article" date="2011" name="Nat. Genet.">
        <title>The Arabidopsis lyrata genome sequence and the basis of rapid genome size change.</title>
        <authorList>
            <person name="Hu T.T."/>
            <person name="Pattyn P."/>
            <person name="Bakker E.G."/>
            <person name="Cao J."/>
            <person name="Cheng J.-F."/>
            <person name="Clark R.M."/>
            <person name="Fahlgren N."/>
            <person name="Fawcett J.A."/>
            <person name="Grimwood J."/>
            <person name="Gundlach H."/>
            <person name="Haberer G."/>
            <person name="Hollister J.D."/>
            <person name="Ossowski S."/>
            <person name="Ottilar R.P."/>
            <person name="Salamov A.A."/>
            <person name="Schneeberger K."/>
            <person name="Spannagl M."/>
            <person name="Wang X."/>
            <person name="Yang L."/>
            <person name="Nasrallah M.E."/>
            <person name="Bergelson J."/>
            <person name="Carrington J.C."/>
            <person name="Gaut B.S."/>
            <person name="Schmutz J."/>
            <person name="Mayer K.F.X."/>
            <person name="Van de Peer Y."/>
            <person name="Grigoriev I.V."/>
            <person name="Nordborg M."/>
            <person name="Weigel D."/>
            <person name="Guo Y.-L."/>
        </authorList>
    </citation>
    <scope>NUCLEOTIDE SEQUENCE [LARGE SCALE GENOMIC DNA]</scope>
    <source>
        <strain>cv. MN47</strain>
    </source>
</reference>
<reference key="2">
    <citation type="journal article" date="2014" name="Plant Physiol.">
        <title>Functional and evolutionary analysis of the CASPARIAN STRIP MEMBRANE DOMAIN PROTEIN family.</title>
        <authorList>
            <person name="Roppolo D."/>
            <person name="Boeckmann B."/>
            <person name="Pfister A."/>
            <person name="Boutet E."/>
            <person name="Rubio M.C."/>
            <person name="Denervaud-Tendon V."/>
            <person name="Vermeer J.E."/>
            <person name="Gheyselinck J."/>
            <person name="Xenarios I."/>
            <person name="Geldner N."/>
        </authorList>
    </citation>
    <scope>GENE FAMILY</scope>
    <scope>NOMENCLATURE</scope>
</reference>
<dbReference type="EMBL" id="GL348716">
    <property type="protein sequence ID" value="EFH57921.1"/>
    <property type="molecule type" value="Genomic_DNA"/>
</dbReference>
<dbReference type="STRING" id="81972.D7LD60"/>
<dbReference type="EnsemblPlants" id="scaffold_402706.1">
    <property type="protein sequence ID" value="scaffold_402706.1"/>
    <property type="gene ID" value="scaffold_402706.1"/>
</dbReference>
<dbReference type="Gramene" id="scaffold_402706.1">
    <property type="protein sequence ID" value="scaffold_402706.1"/>
    <property type="gene ID" value="scaffold_402706.1"/>
</dbReference>
<dbReference type="KEGG" id="aly:9317728"/>
<dbReference type="eggNOG" id="ENOG502S98H">
    <property type="taxonomic scope" value="Eukaryota"/>
</dbReference>
<dbReference type="HOGENOM" id="CLU_115129_0_0_1"/>
<dbReference type="OrthoDB" id="685197at2759"/>
<dbReference type="Proteomes" id="UP000008694">
    <property type="component" value="Unassembled WGS sequence"/>
</dbReference>
<dbReference type="GO" id="GO:0005886">
    <property type="term" value="C:plasma membrane"/>
    <property type="evidence" value="ECO:0007669"/>
    <property type="project" value="UniProtKB-SubCell"/>
</dbReference>
<dbReference type="InterPro" id="IPR006702">
    <property type="entry name" value="CASP_dom"/>
</dbReference>
<dbReference type="PANTHER" id="PTHR33573">
    <property type="entry name" value="CASP-LIKE PROTEIN 4A4"/>
    <property type="match status" value="1"/>
</dbReference>
<dbReference type="PANTHER" id="PTHR33573:SF44">
    <property type="entry name" value="CASP-LIKE PROTEIN 4D1"/>
    <property type="match status" value="1"/>
</dbReference>
<dbReference type="Pfam" id="PF04535">
    <property type="entry name" value="CASP_dom"/>
    <property type="match status" value="1"/>
</dbReference>
<sequence length="178" mass="19325">MAPPPPSPPSVTLRTVLLLLRVLTAAFLVITVVLISTNTVTLEVSSTSIKMRFNDVYAYRYMLSAAVIGLLYAVVQLFLTISQFATGTTHPLNYQFNFYGDKIISYLLATGSAAGFGVSKDLKETFLALIEFDSTDPVDKFFSKGYASASLLLFAFVSLAVLSVFSSLALSKRPIQVS</sequence>
<name>CSPLK_ARALL</name>
<proteinExistence type="inferred from homology"/>
<accession>D7LD60</accession>
<feature type="chain" id="PRO_0000417760" description="CASP-like protein 4D1">
    <location>
        <begin position="1"/>
        <end position="178"/>
    </location>
</feature>
<feature type="topological domain" description="Cytoplasmic" evidence="2">
    <location>
        <begin position="1"/>
        <end position="14"/>
    </location>
</feature>
<feature type="transmembrane region" description="Helical" evidence="2">
    <location>
        <begin position="15"/>
        <end position="35"/>
    </location>
</feature>
<feature type="topological domain" description="Extracellular" evidence="2">
    <location>
        <begin position="36"/>
        <end position="60"/>
    </location>
</feature>
<feature type="transmembrane region" description="Helical" evidence="2">
    <location>
        <begin position="61"/>
        <end position="81"/>
    </location>
</feature>
<feature type="topological domain" description="Cytoplasmic" evidence="2">
    <location>
        <begin position="82"/>
        <end position="149"/>
    </location>
</feature>
<feature type="transmembrane region" description="Helical" evidence="2">
    <location>
        <begin position="150"/>
        <end position="170"/>
    </location>
</feature>
<feature type="topological domain" description="Extracellular" evidence="2">
    <location>
        <begin position="171"/>
        <end position="178"/>
    </location>
</feature>
<protein>
    <recommendedName>
        <fullName>CASP-like protein 4D1</fullName>
        <shortName>AlCASPL4D1</shortName>
    </recommendedName>
</protein>
<organism>
    <name type="scientific">Arabidopsis lyrata subsp. lyrata</name>
    <name type="common">Lyre-leaved rock-cress</name>
    <dbReference type="NCBI Taxonomy" id="81972"/>
    <lineage>
        <taxon>Eukaryota</taxon>
        <taxon>Viridiplantae</taxon>
        <taxon>Streptophyta</taxon>
        <taxon>Embryophyta</taxon>
        <taxon>Tracheophyta</taxon>
        <taxon>Spermatophyta</taxon>
        <taxon>Magnoliopsida</taxon>
        <taxon>eudicotyledons</taxon>
        <taxon>Gunneridae</taxon>
        <taxon>Pentapetalae</taxon>
        <taxon>rosids</taxon>
        <taxon>malvids</taxon>
        <taxon>Brassicales</taxon>
        <taxon>Brassicaceae</taxon>
        <taxon>Camelineae</taxon>
        <taxon>Arabidopsis</taxon>
    </lineage>
</organism>
<evidence type="ECO:0000250" key="1"/>
<evidence type="ECO:0000255" key="2"/>
<evidence type="ECO:0000305" key="3"/>
<keyword id="KW-1003">Cell membrane</keyword>
<keyword id="KW-0472">Membrane</keyword>
<keyword id="KW-1185">Reference proteome</keyword>
<keyword id="KW-0812">Transmembrane</keyword>
<keyword id="KW-1133">Transmembrane helix</keyword>
<comment type="subunit">
    <text evidence="1">Homodimer and heterodimers.</text>
</comment>
<comment type="subcellular location">
    <subcellularLocation>
        <location evidence="1">Cell membrane</location>
        <topology evidence="1">Multi-pass membrane protein</topology>
    </subcellularLocation>
</comment>
<comment type="similarity">
    <text evidence="3">Belongs to the Casparian strip membrane proteins (CASP) family.</text>
</comment>
<gene>
    <name type="ORF">ARALYDRAFT_903205</name>
</gene>